<keyword id="KW-0119">Carbohydrate metabolism</keyword>
<keyword id="KW-0456">Lyase</keyword>
<keyword id="KW-1185">Reference proteome</keyword>
<reference key="1">
    <citation type="journal article" date="2001" name="Nature">
        <title>Complete genome sequence of Salmonella enterica serovar Typhimurium LT2.</title>
        <authorList>
            <person name="McClelland M."/>
            <person name="Sanderson K.E."/>
            <person name="Spieth J."/>
            <person name="Clifton S.W."/>
            <person name="Latreille P."/>
            <person name="Courtney L."/>
            <person name="Porwollik S."/>
            <person name="Ali J."/>
            <person name="Dante M."/>
            <person name="Du F."/>
            <person name="Hou S."/>
            <person name="Layman D."/>
            <person name="Leonard S."/>
            <person name="Nguyen C."/>
            <person name="Scott K."/>
            <person name="Holmes A."/>
            <person name="Grewal N."/>
            <person name="Mulvaney E."/>
            <person name="Ryan E."/>
            <person name="Sun H."/>
            <person name="Florea L."/>
            <person name="Miller W."/>
            <person name="Stoneking T."/>
            <person name="Nhan M."/>
            <person name="Waterston R."/>
            <person name="Wilson R.K."/>
        </authorList>
    </citation>
    <scope>NUCLEOTIDE SEQUENCE [LARGE SCALE GENOMIC DNA]</scope>
    <source>
        <strain>LT2 / SGSC1412 / ATCC 700720</strain>
    </source>
</reference>
<feature type="chain" id="PRO_0000214833" description="N-acetylmuramic acid 6-phosphate etherase">
    <location>
        <begin position="1"/>
        <end position="297"/>
    </location>
</feature>
<feature type="domain" description="SIS" evidence="1">
    <location>
        <begin position="55"/>
        <end position="218"/>
    </location>
</feature>
<feature type="active site" description="Proton donor" evidence="1">
    <location>
        <position position="83"/>
    </location>
</feature>
<feature type="active site" evidence="1">
    <location>
        <position position="114"/>
    </location>
</feature>
<sequence length="297" mass="30875">MNLGTLVSETRNPQTMDLDALPTPELVKRFNEQDTLVAEAVKATLPDVARAVDAAAAALKSGGRIIYMGAGTSGRLGVLDASECPPTFGVPHGLVVGLIAGGPGALLKAVEGAEDSQQAGEDDLVALNLQEQDLVVGLAASGRTPYVIGGLRYARQSGCTTVAVSCNPDSPIAREANIAISPVVGPEALTGSTRLKSGTAQKMVLNMISTGAMVKFGKVYQNLMVDMKATNVKLVDRACRMVVEATGIGREEAEALLKQTDFEVKPAILMALTGLDAAAAREKLAAHQGFLRAALEH</sequence>
<proteinExistence type="inferred from homology"/>
<gene>
    <name evidence="1" type="primary">murQ</name>
    <name type="synonym">yfeU</name>
    <name type="ordered locus">STM2571</name>
</gene>
<evidence type="ECO:0000255" key="1">
    <source>
        <dbReference type="HAMAP-Rule" id="MF_00068"/>
    </source>
</evidence>
<accession>Q8ZN25</accession>
<protein>
    <recommendedName>
        <fullName evidence="1">N-acetylmuramic acid 6-phosphate etherase</fullName>
        <shortName evidence="1">MurNAc-6-P etherase</shortName>
        <ecNumber evidence="1">4.2.1.126</ecNumber>
    </recommendedName>
    <alternativeName>
        <fullName evidence="1">N-acetylmuramic acid 6-phosphate hydrolase</fullName>
    </alternativeName>
    <alternativeName>
        <fullName evidence="1">N-acetylmuramic acid 6-phosphate lyase</fullName>
    </alternativeName>
</protein>
<organism>
    <name type="scientific">Salmonella typhimurium (strain LT2 / SGSC1412 / ATCC 700720)</name>
    <dbReference type="NCBI Taxonomy" id="99287"/>
    <lineage>
        <taxon>Bacteria</taxon>
        <taxon>Pseudomonadati</taxon>
        <taxon>Pseudomonadota</taxon>
        <taxon>Gammaproteobacteria</taxon>
        <taxon>Enterobacterales</taxon>
        <taxon>Enterobacteriaceae</taxon>
        <taxon>Salmonella</taxon>
    </lineage>
</organism>
<comment type="function">
    <text evidence="1">Specifically catalyzes the cleavage of the D-lactyl ether substituent of MurNAc 6-phosphate, producing GlcNAc 6-phosphate and D-lactate. Together with AnmK, is also required for the utilization of anhydro-N-acetylmuramic acid (anhMurNAc) either imported from the medium or derived from its own cell wall murein, and thus plays a role in cell wall recycling.</text>
</comment>
<comment type="catalytic activity">
    <reaction evidence="1">
        <text>N-acetyl-D-muramate 6-phosphate + H2O = N-acetyl-D-glucosamine 6-phosphate + (R)-lactate</text>
        <dbReference type="Rhea" id="RHEA:26410"/>
        <dbReference type="ChEBI" id="CHEBI:15377"/>
        <dbReference type="ChEBI" id="CHEBI:16004"/>
        <dbReference type="ChEBI" id="CHEBI:57513"/>
        <dbReference type="ChEBI" id="CHEBI:58722"/>
        <dbReference type="EC" id="4.2.1.126"/>
    </reaction>
</comment>
<comment type="pathway">
    <text evidence="1">Amino-sugar metabolism; 1,6-anhydro-N-acetylmuramate degradation.</text>
</comment>
<comment type="pathway">
    <text evidence="1">Amino-sugar metabolism; N-acetylmuramate degradation.</text>
</comment>
<comment type="pathway">
    <text evidence="1">Cell wall biogenesis; peptidoglycan recycling.</text>
</comment>
<comment type="subunit">
    <text evidence="1">Homodimer.</text>
</comment>
<comment type="induction">
    <text evidence="1">Induced by MurNAc 6-phosphate that releases the repressor MurR from the DNA. Repressed by MurR in the absence of MurNAc 6-phosphate.</text>
</comment>
<comment type="miscellaneous">
    <text evidence="1">A lyase-type mechanism (elimination/hydration) is suggested for the cleavage of the lactyl ether bond of MurNAc 6-phosphate, with the formation of an alpha,beta-unsaturated aldehyde intermediate with (E)-stereochemistry, followed by the syn addition of water to give product.</text>
</comment>
<comment type="similarity">
    <text evidence="1">Belongs to the GCKR-like family. MurNAc-6-P etherase subfamily.</text>
</comment>
<name>MURQ_SALTY</name>
<dbReference type="EC" id="4.2.1.126" evidence="1"/>
<dbReference type="EMBL" id="AE006468">
    <property type="protein sequence ID" value="AAL21465.1"/>
    <property type="molecule type" value="Genomic_DNA"/>
</dbReference>
<dbReference type="RefSeq" id="NP_461506.1">
    <property type="nucleotide sequence ID" value="NC_003197.2"/>
</dbReference>
<dbReference type="RefSeq" id="WP_001048530.1">
    <property type="nucleotide sequence ID" value="NC_003197.2"/>
</dbReference>
<dbReference type="SMR" id="Q8ZN25"/>
<dbReference type="STRING" id="99287.STM2571"/>
<dbReference type="PaxDb" id="99287-STM2571"/>
<dbReference type="GeneID" id="1254093"/>
<dbReference type="KEGG" id="stm:STM2571"/>
<dbReference type="PATRIC" id="fig|99287.12.peg.2712"/>
<dbReference type="HOGENOM" id="CLU_049049_1_1_6"/>
<dbReference type="OMA" id="MDAVECP"/>
<dbReference type="PhylomeDB" id="Q8ZN25"/>
<dbReference type="BioCyc" id="SENT99287:STM2571-MONOMER"/>
<dbReference type="UniPathway" id="UPA00342"/>
<dbReference type="UniPathway" id="UPA00343"/>
<dbReference type="UniPathway" id="UPA00544"/>
<dbReference type="Proteomes" id="UP000001014">
    <property type="component" value="Chromosome"/>
</dbReference>
<dbReference type="GO" id="GO:0097367">
    <property type="term" value="F:carbohydrate derivative binding"/>
    <property type="evidence" value="ECO:0007669"/>
    <property type="project" value="InterPro"/>
</dbReference>
<dbReference type="GO" id="GO:0016835">
    <property type="term" value="F:carbon-oxygen lyase activity"/>
    <property type="evidence" value="ECO:0000318"/>
    <property type="project" value="GO_Central"/>
</dbReference>
<dbReference type="GO" id="GO:0016803">
    <property type="term" value="F:ether hydrolase activity"/>
    <property type="evidence" value="ECO:0000318"/>
    <property type="project" value="GO_Central"/>
</dbReference>
<dbReference type="GO" id="GO:0097175">
    <property type="term" value="P:1,6-anhydro-N-acetyl-beta-muramic acid catabolic process"/>
    <property type="evidence" value="ECO:0007669"/>
    <property type="project" value="UniProtKB-UniRule"/>
</dbReference>
<dbReference type="GO" id="GO:0046348">
    <property type="term" value="P:amino sugar catabolic process"/>
    <property type="evidence" value="ECO:0000318"/>
    <property type="project" value="GO_Central"/>
</dbReference>
<dbReference type="GO" id="GO:0097173">
    <property type="term" value="P:N-acetylmuramic acid catabolic process"/>
    <property type="evidence" value="ECO:0007669"/>
    <property type="project" value="UniProtKB-UniPathway"/>
</dbReference>
<dbReference type="GO" id="GO:0009254">
    <property type="term" value="P:peptidoglycan turnover"/>
    <property type="evidence" value="ECO:0000318"/>
    <property type="project" value="GO_Central"/>
</dbReference>
<dbReference type="CDD" id="cd05007">
    <property type="entry name" value="SIS_Etherase"/>
    <property type="match status" value="1"/>
</dbReference>
<dbReference type="FunFam" id="1.10.8.1080:FF:000001">
    <property type="entry name" value="N-acetylmuramic acid 6-phosphate etherase"/>
    <property type="match status" value="1"/>
</dbReference>
<dbReference type="FunFam" id="3.40.50.10490:FF:000014">
    <property type="entry name" value="N-acetylmuramic acid 6-phosphate etherase"/>
    <property type="match status" value="1"/>
</dbReference>
<dbReference type="Gene3D" id="1.10.8.1080">
    <property type="match status" value="1"/>
</dbReference>
<dbReference type="Gene3D" id="3.40.50.10490">
    <property type="entry name" value="Glucose-6-phosphate isomerase like protein, domain 1"/>
    <property type="match status" value="1"/>
</dbReference>
<dbReference type="HAMAP" id="MF_00068">
    <property type="entry name" value="MurQ"/>
    <property type="match status" value="1"/>
</dbReference>
<dbReference type="InterPro" id="IPR005488">
    <property type="entry name" value="Etherase_MurQ"/>
</dbReference>
<dbReference type="InterPro" id="IPR005486">
    <property type="entry name" value="Glucokinase_regulatory_CS"/>
</dbReference>
<dbReference type="InterPro" id="IPR040190">
    <property type="entry name" value="MURQ/GCKR"/>
</dbReference>
<dbReference type="InterPro" id="IPR001347">
    <property type="entry name" value="SIS_dom"/>
</dbReference>
<dbReference type="InterPro" id="IPR046348">
    <property type="entry name" value="SIS_dom_sf"/>
</dbReference>
<dbReference type="NCBIfam" id="TIGR00274">
    <property type="entry name" value="N-acetylmuramic acid 6-phosphate etherase"/>
    <property type="match status" value="1"/>
</dbReference>
<dbReference type="NCBIfam" id="NF003915">
    <property type="entry name" value="PRK05441.1"/>
    <property type="match status" value="1"/>
</dbReference>
<dbReference type="NCBIfam" id="NF009222">
    <property type="entry name" value="PRK12570.1"/>
    <property type="match status" value="1"/>
</dbReference>
<dbReference type="PANTHER" id="PTHR10088">
    <property type="entry name" value="GLUCOKINASE REGULATORY PROTEIN"/>
    <property type="match status" value="1"/>
</dbReference>
<dbReference type="PANTHER" id="PTHR10088:SF5">
    <property type="entry name" value="N-ACETYLMURAMIC ACID 6-PHOSPHATE ETHERASE"/>
    <property type="match status" value="1"/>
</dbReference>
<dbReference type="Pfam" id="PF22645">
    <property type="entry name" value="GKRP_SIS_N"/>
    <property type="match status" value="1"/>
</dbReference>
<dbReference type="SUPFAM" id="SSF53697">
    <property type="entry name" value="SIS domain"/>
    <property type="match status" value="1"/>
</dbReference>
<dbReference type="PROSITE" id="PS01272">
    <property type="entry name" value="GCKR"/>
    <property type="match status" value="1"/>
</dbReference>
<dbReference type="PROSITE" id="PS51464">
    <property type="entry name" value="SIS"/>
    <property type="match status" value="1"/>
</dbReference>